<gene>
    <name evidence="1" type="primary">ibpB</name>
    <name type="ordered locus">E2348C_3996</name>
</gene>
<reference key="1">
    <citation type="journal article" date="2009" name="J. Bacteriol.">
        <title>Complete genome sequence and comparative genome analysis of enteropathogenic Escherichia coli O127:H6 strain E2348/69.</title>
        <authorList>
            <person name="Iguchi A."/>
            <person name="Thomson N.R."/>
            <person name="Ogura Y."/>
            <person name="Saunders D."/>
            <person name="Ooka T."/>
            <person name="Henderson I.R."/>
            <person name="Harris D."/>
            <person name="Asadulghani M."/>
            <person name="Kurokawa K."/>
            <person name="Dean P."/>
            <person name="Kenny B."/>
            <person name="Quail M.A."/>
            <person name="Thurston S."/>
            <person name="Dougan G."/>
            <person name="Hayashi T."/>
            <person name="Parkhill J."/>
            <person name="Frankel G."/>
        </authorList>
    </citation>
    <scope>NUCLEOTIDE SEQUENCE [LARGE SCALE GENOMIC DNA]</scope>
    <source>
        <strain>E2348/69 / EPEC</strain>
    </source>
</reference>
<evidence type="ECO:0000255" key="1">
    <source>
        <dbReference type="HAMAP-Rule" id="MF_02001"/>
    </source>
</evidence>
<evidence type="ECO:0000255" key="2">
    <source>
        <dbReference type="PROSITE-ProRule" id="PRU00285"/>
    </source>
</evidence>
<accession>B7UMF3</accession>
<proteinExistence type="inferred from homology"/>
<keyword id="KW-0143">Chaperone</keyword>
<keyword id="KW-0963">Cytoplasm</keyword>
<keyword id="KW-1185">Reference proteome</keyword>
<keyword id="KW-0346">Stress response</keyword>
<dbReference type="EMBL" id="FM180568">
    <property type="protein sequence ID" value="CAS11544.1"/>
    <property type="molecule type" value="Genomic_DNA"/>
</dbReference>
<dbReference type="RefSeq" id="WP_001243431.1">
    <property type="nucleotide sequence ID" value="NC_011601.1"/>
</dbReference>
<dbReference type="SMR" id="B7UMF3"/>
<dbReference type="GeneID" id="93778427"/>
<dbReference type="KEGG" id="ecg:E2348C_3996"/>
<dbReference type="HOGENOM" id="CLU_046737_4_2_6"/>
<dbReference type="Proteomes" id="UP000008205">
    <property type="component" value="Chromosome"/>
</dbReference>
<dbReference type="GO" id="GO:0005737">
    <property type="term" value="C:cytoplasm"/>
    <property type="evidence" value="ECO:0007669"/>
    <property type="project" value="UniProtKB-SubCell"/>
</dbReference>
<dbReference type="GO" id="GO:0050821">
    <property type="term" value="P:protein stabilization"/>
    <property type="evidence" value="ECO:0007669"/>
    <property type="project" value="UniProtKB-UniRule"/>
</dbReference>
<dbReference type="CDD" id="cd06470">
    <property type="entry name" value="ACD_IbpA-B_like"/>
    <property type="match status" value="1"/>
</dbReference>
<dbReference type="FunFam" id="2.60.40.790:FF:000005">
    <property type="entry name" value="Small heat shock protein IbpB"/>
    <property type="match status" value="1"/>
</dbReference>
<dbReference type="Gene3D" id="2.60.40.790">
    <property type="match status" value="1"/>
</dbReference>
<dbReference type="HAMAP" id="MF_02001">
    <property type="entry name" value="HSP20_IbpB"/>
    <property type="match status" value="1"/>
</dbReference>
<dbReference type="InterPro" id="IPR002068">
    <property type="entry name" value="A-crystallin/Hsp20_dom"/>
</dbReference>
<dbReference type="InterPro" id="IPR037913">
    <property type="entry name" value="ACD_IbpA/B"/>
</dbReference>
<dbReference type="InterPro" id="IPR008978">
    <property type="entry name" value="HSP20-like_chaperone"/>
</dbReference>
<dbReference type="InterPro" id="IPR022848">
    <property type="entry name" value="HSP20_IbpB"/>
</dbReference>
<dbReference type="NCBIfam" id="NF008618">
    <property type="entry name" value="PRK11597.1"/>
    <property type="match status" value="1"/>
</dbReference>
<dbReference type="PANTHER" id="PTHR47062">
    <property type="match status" value="1"/>
</dbReference>
<dbReference type="PANTHER" id="PTHR47062:SF2">
    <property type="entry name" value="SMALL HEAT SHOCK PROTEIN IBPB"/>
    <property type="match status" value="1"/>
</dbReference>
<dbReference type="Pfam" id="PF00011">
    <property type="entry name" value="HSP20"/>
    <property type="match status" value="1"/>
</dbReference>
<dbReference type="SUPFAM" id="SSF49764">
    <property type="entry name" value="HSP20-like chaperones"/>
    <property type="match status" value="1"/>
</dbReference>
<dbReference type="PROSITE" id="PS01031">
    <property type="entry name" value="SHSP"/>
    <property type="match status" value="1"/>
</dbReference>
<comment type="function">
    <text evidence="1">Associates with aggregated proteins, together with IbpA, to stabilize and protect them from irreversible denaturation and extensive proteolysis during heat shock and oxidative stress. Aggregated proteins bound to the IbpAB complex are more efficiently refolded and reactivated by the ATP-dependent chaperone systems ClpB and DnaK/DnaJ/GrpE. Its activity is ATP-independent.</text>
</comment>
<comment type="subunit">
    <text evidence="1">Homodimer. Forms homomultimers of about 100-150 subunits at optimal growth temperatures. Conformation changes to oligomers at high temperatures or high ionic concentrations. The decrease in size of the multimers is accompanied by an increase in chaperone activity.</text>
</comment>
<comment type="subcellular location">
    <subcellularLocation>
        <location evidence="1">Cytoplasm</location>
    </subcellularLocation>
</comment>
<comment type="domain">
    <text evidence="1">The N- and C-terminal flexible termini are involved in oligomerization and in the binding of non-native substrate proteins, and are essential for chaperone activity.</text>
</comment>
<comment type="similarity">
    <text evidence="1 2">Belongs to the small heat shock protein (HSP20) family.</text>
</comment>
<feature type="chain" id="PRO_1000189095" description="Small heat shock protein IbpB">
    <location>
        <begin position="1"/>
        <end position="142"/>
    </location>
</feature>
<feature type="domain" description="sHSP" evidence="2">
    <location>
        <begin position="26"/>
        <end position="137"/>
    </location>
</feature>
<name>IBPB_ECO27</name>
<sequence length="142" mass="16093">MRNFDLSPLMRQWIGFDKLANALQNAGESQSFPPYNIEKSDDNHYRITLALAGFRQEDLEIQLEGTRLSVKGTPEQPKEEKKWLHQGLMNQPFSLSFTLAENMEVSGATFVNGLLHIDLIRNEPEPIAAQRIAISERPALNS</sequence>
<protein>
    <recommendedName>
        <fullName evidence="1">Small heat shock protein IbpB</fullName>
    </recommendedName>
    <alternativeName>
        <fullName evidence="1">16 kDa heat shock protein B</fullName>
    </alternativeName>
</protein>
<organism>
    <name type="scientific">Escherichia coli O127:H6 (strain E2348/69 / EPEC)</name>
    <dbReference type="NCBI Taxonomy" id="574521"/>
    <lineage>
        <taxon>Bacteria</taxon>
        <taxon>Pseudomonadati</taxon>
        <taxon>Pseudomonadota</taxon>
        <taxon>Gammaproteobacteria</taxon>
        <taxon>Enterobacterales</taxon>
        <taxon>Enterobacteriaceae</taxon>
        <taxon>Escherichia</taxon>
    </lineage>
</organism>